<proteinExistence type="inferred from homology"/>
<keyword id="KW-0488">Methylation</keyword>
<keyword id="KW-0687">Ribonucleoprotein</keyword>
<keyword id="KW-0689">Ribosomal protein</keyword>
<keyword id="KW-0694">RNA-binding</keyword>
<keyword id="KW-0699">rRNA-binding</keyword>
<name>RL11_RHILO</name>
<protein>
    <recommendedName>
        <fullName evidence="1">Large ribosomal subunit protein uL11</fullName>
    </recommendedName>
    <alternativeName>
        <fullName evidence="2">50S ribosomal protein L11</fullName>
    </alternativeName>
</protein>
<comment type="function">
    <text evidence="1">Forms part of the ribosomal stalk which helps the ribosome interact with GTP-bound translation factors.</text>
</comment>
<comment type="subunit">
    <text evidence="1">Part of the ribosomal stalk of the 50S ribosomal subunit. Interacts with L10 and the large rRNA to form the base of the stalk. L10 forms an elongated spine to which L12 dimers bind in a sequential fashion forming a multimeric L10(L12)X complex.</text>
</comment>
<comment type="PTM">
    <text evidence="1">One or more lysine residues are methylated.</text>
</comment>
<comment type="similarity">
    <text evidence="1">Belongs to the universal ribosomal protein uL11 family.</text>
</comment>
<sequence>MAKKIAGQLKLQVSAGSATPSPPIGPALGQRGINIMEFCKAFNAQTQEMEKGSPVPVVITYYQDKSFTFVMKTPPVSYFLKKAANLKSGSKEPGKVKAGTVSRDKVREIATAKMKDLNANDVEAAMRMVEGSARSMGLEVVG</sequence>
<feature type="chain" id="PRO_0000104347" description="Large ribosomal subunit protein uL11">
    <location>
        <begin position="1"/>
        <end position="142"/>
    </location>
</feature>
<evidence type="ECO:0000255" key="1">
    <source>
        <dbReference type="HAMAP-Rule" id="MF_00736"/>
    </source>
</evidence>
<evidence type="ECO:0000305" key="2"/>
<gene>
    <name evidence="1" type="primary">rplK</name>
    <name type="ordered locus">mlr0271</name>
</gene>
<organism>
    <name type="scientific">Mesorhizobium japonicum (strain LMG 29417 / CECT 9101 / MAFF 303099)</name>
    <name type="common">Mesorhizobium loti (strain MAFF 303099)</name>
    <dbReference type="NCBI Taxonomy" id="266835"/>
    <lineage>
        <taxon>Bacteria</taxon>
        <taxon>Pseudomonadati</taxon>
        <taxon>Pseudomonadota</taxon>
        <taxon>Alphaproteobacteria</taxon>
        <taxon>Hyphomicrobiales</taxon>
        <taxon>Phyllobacteriaceae</taxon>
        <taxon>Mesorhizobium</taxon>
    </lineage>
</organism>
<accession>Q98N70</accession>
<reference key="1">
    <citation type="journal article" date="2000" name="DNA Res.">
        <title>Complete genome structure of the nitrogen-fixing symbiotic bacterium Mesorhizobium loti.</title>
        <authorList>
            <person name="Kaneko T."/>
            <person name="Nakamura Y."/>
            <person name="Sato S."/>
            <person name="Asamizu E."/>
            <person name="Kato T."/>
            <person name="Sasamoto S."/>
            <person name="Watanabe A."/>
            <person name="Idesawa K."/>
            <person name="Ishikawa A."/>
            <person name="Kawashima K."/>
            <person name="Kimura T."/>
            <person name="Kishida Y."/>
            <person name="Kiyokawa C."/>
            <person name="Kohara M."/>
            <person name="Matsumoto M."/>
            <person name="Matsuno A."/>
            <person name="Mochizuki Y."/>
            <person name="Nakayama S."/>
            <person name="Nakazaki N."/>
            <person name="Shimpo S."/>
            <person name="Sugimoto M."/>
            <person name="Takeuchi C."/>
            <person name="Yamada M."/>
            <person name="Tabata S."/>
        </authorList>
    </citation>
    <scope>NUCLEOTIDE SEQUENCE [LARGE SCALE GENOMIC DNA]</scope>
    <source>
        <strain>LMG 29417 / CECT 9101 / MAFF 303099</strain>
    </source>
</reference>
<dbReference type="EMBL" id="BA000012">
    <property type="protein sequence ID" value="BAB47892.1"/>
    <property type="molecule type" value="Genomic_DNA"/>
</dbReference>
<dbReference type="RefSeq" id="WP_010909262.1">
    <property type="nucleotide sequence ID" value="NC_002678.2"/>
</dbReference>
<dbReference type="SMR" id="Q98N70"/>
<dbReference type="GeneID" id="90991596"/>
<dbReference type="KEGG" id="mlo:mlr0271"/>
<dbReference type="eggNOG" id="COG0080">
    <property type="taxonomic scope" value="Bacteria"/>
</dbReference>
<dbReference type="HOGENOM" id="CLU_074237_2_0_5"/>
<dbReference type="Proteomes" id="UP000000552">
    <property type="component" value="Chromosome"/>
</dbReference>
<dbReference type="GO" id="GO:0022625">
    <property type="term" value="C:cytosolic large ribosomal subunit"/>
    <property type="evidence" value="ECO:0007669"/>
    <property type="project" value="TreeGrafter"/>
</dbReference>
<dbReference type="GO" id="GO:0070180">
    <property type="term" value="F:large ribosomal subunit rRNA binding"/>
    <property type="evidence" value="ECO:0007669"/>
    <property type="project" value="UniProtKB-UniRule"/>
</dbReference>
<dbReference type="GO" id="GO:0003735">
    <property type="term" value="F:structural constituent of ribosome"/>
    <property type="evidence" value="ECO:0007669"/>
    <property type="project" value="InterPro"/>
</dbReference>
<dbReference type="GO" id="GO:0006412">
    <property type="term" value="P:translation"/>
    <property type="evidence" value="ECO:0007669"/>
    <property type="project" value="UniProtKB-UniRule"/>
</dbReference>
<dbReference type="CDD" id="cd00349">
    <property type="entry name" value="Ribosomal_L11"/>
    <property type="match status" value="1"/>
</dbReference>
<dbReference type="FunFam" id="1.10.10.250:FF:000001">
    <property type="entry name" value="50S ribosomal protein L11"/>
    <property type="match status" value="1"/>
</dbReference>
<dbReference type="FunFam" id="3.30.1550.10:FF:000001">
    <property type="entry name" value="50S ribosomal protein L11"/>
    <property type="match status" value="1"/>
</dbReference>
<dbReference type="Gene3D" id="1.10.10.250">
    <property type="entry name" value="Ribosomal protein L11, C-terminal domain"/>
    <property type="match status" value="1"/>
</dbReference>
<dbReference type="Gene3D" id="3.30.1550.10">
    <property type="entry name" value="Ribosomal protein L11/L12, N-terminal domain"/>
    <property type="match status" value="1"/>
</dbReference>
<dbReference type="HAMAP" id="MF_00736">
    <property type="entry name" value="Ribosomal_uL11"/>
    <property type="match status" value="1"/>
</dbReference>
<dbReference type="InterPro" id="IPR000911">
    <property type="entry name" value="Ribosomal_uL11"/>
</dbReference>
<dbReference type="InterPro" id="IPR006519">
    <property type="entry name" value="Ribosomal_uL11_bac-typ"/>
</dbReference>
<dbReference type="InterPro" id="IPR020783">
    <property type="entry name" value="Ribosomal_uL11_C"/>
</dbReference>
<dbReference type="InterPro" id="IPR036769">
    <property type="entry name" value="Ribosomal_uL11_C_sf"/>
</dbReference>
<dbReference type="InterPro" id="IPR020785">
    <property type="entry name" value="Ribosomal_uL11_CS"/>
</dbReference>
<dbReference type="InterPro" id="IPR020784">
    <property type="entry name" value="Ribosomal_uL11_N"/>
</dbReference>
<dbReference type="InterPro" id="IPR036796">
    <property type="entry name" value="Ribosomal_uL11_N_sf"/>
</dbReference>
<dbReference type="NCBIfam" id="TIGR01632">
    <property type="entry name" value="L11_bact"/>
    <property type="match status" value="1"/>
</dbReference>
<dbReference type="PANTHER" id="PTHR11661">
    <property type="entry name" value="60S RIBOSOMAL PROTEIN L12"/>
    <property type="match status" value="1"/>
</dbReference>
<dbReference type="PANTHER" id="PTHR11661:SF1">
    <property type="entry name" value="LARGE RIBOSOMAL SUBUNIT PROTEIN UL11M"/>
    <property type="match status" value="1"/>
</dbReference>
<dbReference type="Pfam" id="PF00298">
    <property type="entry name" value="Ribosomal_L11"/>
    <property type="match status" value="1"/>
</dbReference>
<dbReference type="Pfam" id="PF03946">
    <property type="entry name" value="Ribosomal_L11_N"/>
    <property type="match status" value="1"/>
</dbReference>
<dbReference type="SMART" id="SM00649">
    <property type="entry name" value="RL11"/>
    <property type="match status" value="1"/>
</dbReference>
<dbReference type="SUPFAM" id="SSF54747">
    <property type="entry name" value="Ribosomal L11/L12e N-terminal domain"/>
    <property type="match status" value="1"/>
</dbReference>
<dbReference type="SUPFAM" id="SSF46906">
    <property type="entry name" value="Ribosomal protein L11, C-terminal domain"/>
    <property type="match status" value="1"/>
</dbReference>
<dbReference type="PROSITE" id="PS00359">
    <property type="entry name" value="RIBOSOMAL_L11"/>
    <property type="match status" value="1"/>
</dbReference>